<protein>
    <recommendedName>
        <fullName evidence="1">Mannosyl-3-phosphoglycerate phosphatase</fullName>
        <shortName evidence="1">MPGP</shortName>
        <ecNumber evidence="1">3.1.3.70</ecNumber>
    </recommendedName>
</protein>
<gene>
    <name type="primary">yedP</name>
    <name type="ordered locus">ECP_1888</name>
</gene>
<evidence type="ECO:0000255" key="1">
    <source>
        <dbReference type="HAMAP-Rule" id="MF_00617"/>
    </source>
</evidence>
<accession>Q0TGP0</accession>
<keyword id="KW-0963">Cytoplasm</keyword>
<keyword id="KW-0378">Hydrolase</keyword>
<keyword id="KW-0460">Magnesium</keyword>
<keyword id="KW-0479">Metal-binding</keyword>
<feature type="chain" id="PRO_0000273958" description="Mannosyl-3-phosphoglycerate phosphatase">
    <location>
        <begin position="1"/>
        <end position="271"/>
    </location>
</feature>
<feature type="active site" description="Nucleophile" evidence="1">
    <location>
        <position position="13"/>
    </location>
</feature>
<feature type="binding site" evidence="1">
    <location>
        <position position="13"/>
    </location>
    <ligand>
        <name>Mg(2+)</name>
        <dbReference type="ChEBI" id="CHEBI:18420"/>
    </ligand>
</feature>
<feature type="binding site" evidence="1">
    <location>
        <position position="15"/>
    </location>
    <ligand>
        <name>Mg(2+)</name>
        <dbReference type="ChEBI" id="CHEBI:18420"/>
    </ligand>
</feature>
<feature type="binding site" evidence="1">
    <location>
        <position position="214"/>
    </location>
    <ligand>
        <name>Mg(2+)</name>
        <dbReference type="ChEBI" id="CHEBI:18420"/>
    </ligand>
</feature>
<comment type="catalytic activity">
    <reaction evidence="1">
        <text>2-O-(alpha-D-mannosyl)-3-phosphoglycerate + H2O = (2R)-2-O-(alpha-D-mannosyl)-glycerate + phosphate</text>
        <dbReference type="Rhea" id="RHEA:19309"/>
        <dbReference type="ChEBI" id="CHEBI:15377"/>
        <dbReference type="ChEBI" id="CHEBI:43474"/>
        <dbReference type="ChEBI" id="CHEBI:57541"/>
        <dbReference type="ChEBI" id="CHEBI:57744"/>
        <dbReference type="EC" id="3.1.3.70"/>
    </reaction>
</comment>
<comment type="cofactor">
    <cofactor evidence="1">
        <name>Mg(2+)</name>
        <dbReference type="ChEBI" id="CHEBI:18420"/>
    </cofactor>
</comment>
<comment type="subcellular location">
    <subcellularLocation>
        <location evidence="1">Cytoplasm</location>
    </subcellularLocation>
</comment>
<comment type="similarity">
    <text evidence="1">Belongs to the HAD-like hydrolase superfamily. MPGP family.</text>
</comment>
<reference key="1">
    <citation type="journal article" date="2006" name="Mol. Microbiol.">
        <title>Role of pathogenicity island-associated integrases in the genome plasticity of uropathogenic Escherichia coli strain 536.</title>
        <authorList>
            <person name="Hochhut B."/>
            <person name="Wilde C."/>
            <person name="Balling G."/>
            <person name="Middendorf B."/>
            <person name="Dobrindt U."/>
            <person name="Brzuszkiewicz E."/>
            <person name="Gottschalk G."/>
            <person name="Carniel E."/>
            <person name="Hacker J."/>
        </authorList>
    </citation>
    <scope>NUCLEOTIDE SEQUENCE [LARGE SCALE GENOMIC DNA]</scope>
    <source>
        <strain>536 / UPEC</strain>
    </source>
</reference>
<organism>
    <name type="scientific">Escherichia coli O6:K15:H31 (strain 536 / UPEC)</name>
    <dbReference type="NCBI Taxonomy" id="362663"/>
    <lineage>
        <taxon>Bacteria</taxon>
        <taxon>Pseudomonadati</taxon>
        <taxon>Pseudomonadota</taxon>
        <taxon>Gammaproteobacteria</taxon>
        <taxon>Enterobacterales</taxon>
        <taxon>Enterobacteriaceae</taxon>
        <taxon>Escherichia</taxon>
    </lineage>
</organism>
<proteinExistence type="inferred from homology"/>
<dbReference type="EC" id="3.1.3.70" evidence="1"/>
<dbReference type="EMBL" id="CP000247">
    <property type="protein sequence ID" value="ABG69889.1"/>
    <property type="molecule type" value="Genomic_DNA"/>
</dbReference>
<dbReference type="RefSeq" id="WP_000491481.1">
    <property type="nucleotide sequence ID" value="NC_008253.1"/>
</dbReference>
<dbReference type="SMR" id="Q0TGP0"/>
<dbReference type="KEGG" id="ecp:ECP_1888"/>
<dbReference type="HOGENOM" id="CLU_063016_1_0_6"/>
<dbReference type="Proteomes" id="UP000009182">
    <property type="component" value="Chromosome"/>
</dbReference>
<dbReference type="GO" id="GO:0005829">
    <property type="term" value="C:cytosol"/>
    <property type="evidence" value="ECO:0007669"/>
    <property type="project" value="TreeGrafter"/>
</dbReference>
<dbReference type="GO" id="GO:0000287">
    <property type="term" value="F:magnesium ion binding"/>
    <property type="evidence" value="ECO:0007669"/>
    <property type="project" value="TreeGrafter"/>
</dbReference>
<dbReference type="GO" id="GO:0050531">
    <property type="term" value="F:mannosyl-3-phosphoglycerate phosphatase activity"/>
    <property type="evidence" value="ECO:0007669"/>
    <property type="project" value="UniProtKB-UniRule"/>
</dbReference>
<dbReference type="GO" id="GO:0051479">
    <property type="term" value="P:mannosylglycerate biosynthetic process"/>
    <property type="evidence" value="ECO:0007669"/>
    <property type="project" value="InterPro"/>
</dbReference>
<dbReference type="CDD" id="cd07507">
    <property type="entry name" value="HAD_Pase"/>
    <property type="match status" value="1"/>
</dbReference>
<dbReference type="Gene3D" id="3.40.50.1000">
    <property type="entry name" value="HAD superfamily/HAD-like"/>
    <property type="match status" value="1"/>
</dbReference>
<dbReference type="Gene3D" id="3.30.980.20">
    <property type="entry name" value="Putative mannosyl-3-phosphoglycerate phosphatase, domain 2"/>
    <property type="match status" value="1"/>
</dbReference>
<dbReference type="HAMAP" id="MF_00617">
    <property type="entry name" value="MPGP_rel"/>
    <property type="match status" value="1"/>
</dbReference>
<dbReference type="InterPro" id="IPR036412">
    <property type="entry name" value="HAD-like_sf"/>
</dbReference>
<dbReference type="InterPro" id="IPR006381">
    <property type="entry name" value="HAD-SF-IIB-MPGP"/>
</dbReference>
<dbReference type="InterPro" id="IPR006379">
    <property type="entry name" value="HAD-SF_hydro_IIB"/>
</dbReference>
<dbReference type="InterPro" id="IPR023214">
    <property type="entry name" value="HAD_sf"/>
</dbReference>
<dbReference type="InterPro" id="IPR012815">
    <property type="entry name" value="MPG_Pase"/>
</dbReference>
<dbReference type="NCBIfam" id="TIGR01484">
    <property type="entry name" value="HAD-SF-IIB"/>
    <property type="match status" value="1"/>
</dbReference>
<dbReference type="NCBIfam" id="TIGR01486">
    <property type="entry name" value="HAD-SF-IIB-MPGP"/>
    <property type="match status" value="1"/>
</dbReference>
<dbReference type="NCBIfam" id="TIGR02463">
    <property type="entry name" value="MPGP_rel"/>
    <property type="match status" value="1"/>
</dbReference>
<dbReference type="NCBIfam" id="NF002976">
    <property type="entry name" value="PRK03669.1"/>
    <property type="match status" value="1"/>
</dbReference>
<dbReference type="PANTHER" id="PTHR10000:SF8">
    <property type="entry name" value="HAD SUPERFAMILY HYDROLASE-LIKE, TYPE 3"/>
    <property type="match status" value="1"/>
</dbReference>
<dbReference type="PANTHER" id="PTHR10000">
    <property type="entry name" value="PHOSPHOSERINE PHOSPHATASE"/>
    <property type="match status" value="1"/>
</dbReference>
<dbReference type="Pfam" id="PF08282">
    <property type="entry name" value="Hydrolase_3"/>
    <property type="match status" value="1"/>
</dbReference>
<dbReference type="SFLD" id="SFLDG01142">
    <property type="entry name" value="C2.B.2:_Mannosyl-3-phosphoglyc"/>
    <property type="match status" value="1"/>
</dbReference>
<dbReference type="SFLD" id="SFLDS00003">
    <property type="entry name" value="Haloacid_Dehalogenase"/>
    <property type="match status" value="1"/>
</dbReference>
<dbReference type="SUPFAM" id="SSF56784">
    <property type="entry name" value="HAD-like"/>
    <property type="match status" value="1"/>
</dbReference>
<name>MPGP_ECOL5</name>
<sequence>MFSIQQPLLVFSDLDGTLLDSHSYDWQPAAPWLSRLHEANIPVILCSSKTSAEMLYLQKMLGLQGLPLIAENGAVIQLAEQWQDIDGFPRIISGISHGEICQVLNTLREKEHFKFTTFDDVDDATIAEWTGLSRSQAALTQLHEASVTLIWRDSDEHMAQFIARLNELGLQFMQGARFWHVLDASAGKDQAANWIIATYQQLSGRRPTTLGLGDGPNDAPLLEVMDYAVIVKGLNREGVHLHDEDPARVWRTQREGPEGWREGLDHFFSAR</sequence>